<proteinExistence type="inferred from homology"/>
<name>CH10_SHIF8</name>
<reference key="1">
    <citation type="journal article" date="2006" name="BMC Genomics">
        <title>Complete genome sequence of Shigella flexneri 5b and comparison with Shigella flexneri 2a.</title>
        <authorList>
            <person name="Nie H."/>
            <person name="Yang F."/>
            <person name="Zhang X."/>
            <person name="Yang J."/>
            <person name="Chen L."/>
            <person name="Wang J."/>
            <person name="Xiong Z."/>
            <person name="Peng J."/>
            <person name="Sun L."/>
            <person name="Dong J."/>
            <person name="Xue Y."/>
            <person name="Xu X."/>
            <person name="Chen S."/>
            <person name="Yao Z."/>
            <person name="Shen Y."/>
            <person name="Jin Q."/>
        </authorList>
    </citation>
    <scope>NUCLEOTIDE SEQUENCE [LARGE SCALE GENOMIC DNA]</scope>
    <source>
        <strain>8401</strain>
    </source>
</reference>
<comment type="function">
    <text evidence="1">Together with the chaperonin GroEL, plays an essential role in assisting protein folding. The GroEL-GroES system forms a nano-cage that allows encapsulation of the non-native substrate proteins and provides a physical environment optimized to promote and accelerate protein folding. GroES binds to the apical surface of the GroEL ring, thereby capping the opening of the GroEL channel.</text>
</comment>
<comment type="subunit">
    <text evidence="1">Heptamer of 7 subunits arranged in a ring. Interacts with the chaperonin GroEL.</text>
</comment>
<comment type="subcellular location">
    <subcellularLocation>
        <location evidence="1">Cytoplasm</location>
    </subcellularLocation>
</comment>
<comment type="similarity">
    <text evidence="1">Belongs to the GroES chaperonin family.</text>
</comment>
<sequence length="97" mass="10387">MNIRPLHDRVIVKRKEVETKSAGGIVLTGSAAAKSTRGEVLAVGNGRILENGEVKPLDVKVGDIVIFNDGYGVKSEKIDNEEVLIMSESDILAIVEA</sequence>
<gene>
    <name evidence="1" type="primary">groES</name>
    <name evidence="1" type="synonym">groS</name>
    <name type="ordered locus">SFV_4298</name>
</gene>
<evidence type="ECO:0000255" key="1">
    <source>
        <dbReference type="HAMAP-Rule" id="MF_00580"/>
    </source>
</evidence>
<organism>
    <name type="scientific">Shigella flexneri serotype 5b (strain 8401)</name>
    <dbReference type="NCBI Taxonomy" id="373384"/>
    <lineage>
        <taxon>Bacteria</taxon>
        <taxon>Pseudomonadati</taxon>
        <taxon>Pseudomonadota</taxon>
        <taxon>Gammaproteobacteria</taxon>
        <taxon>Enterobacterales</taxon>
        <taxon>Enterobacteriaceae</taxon>
        <taxon>Shigella</taxon>
    </lineage>
</organism>
<feature type="chain" id="PRO_1000025371" description="Co-chaperonin GroES">
    <location>
        <begin position="1"/>
        <end position="97"/>
    </location>
</feature>
<dbReference type="EMBL" id="CP000266">
    <property type="protein sequence ID" value="ABF06278.1"/>
    <property type="molecule type" value="Genomic_DNA"/>
</dbReference>
<dbReference type="RefSeq" id="WP_001026276.1">
    <property type="nucleotide sequence ID" value="NC_008258.1"/>
</dbReference>
<dbReference type="SMR" id="Q0SXD7"/>
<dbReference type="KEGG" id="sfv:SFV_4298"/>
<dbReference type="HOGENOM" id="CLU_132825_1_1_6"/>
<dbReference type="Proteomes" id="UP000000659">
    <property type="component" value="Chromosome"/>
</dbReference>
<dbReference type="GO" id="GO:0005737">
    <property type="term" value="C:cytoplasm"/>
    <property type="evidence" value="ECO:0007669"/>
    <property type="project" value="UniProtKB-SubCell"/>
</dbReference>
<dbReference type="GO" id="GO:0005524">
    <property type="term" value="F:ATP binding"/>
    <property type="evidence" value="ECO:0007669"/>
    <property type="project" value="InterPro"/>
</dbReference>
<dbReference type="GO" id="GO:0046872">
    <property type="term" value="F:metal ion binding"/>
    <property type="evidence" value="ECO:0007669"/>
    <property type="project" value="TreeGrafter"/>
</dbReference>
<dbReference type="GO" id="GO:0044183">
    <property type="term" value="F:protein folding chaperone"/>
    <property type="evidence" value="ECO:0007669"/>
    <property type="project" value="InterPro"/>
</dbReference>
<dbReference type="GO" id="GO:0051087">
    <property type="term" value="F:protein-folding chaperone binding"/>
    <property type="evidence" value="ECO:0007669"/>
    <property type="project" value="TreeGrafter"/>
</dbReference>
<dbReference type="GO" id="GO:0051082">
    <property type="term" value="F:unfolded protein binding"/>
    <property type="evidence" value="ECO:0007669"/>
    <property type="project" value="TreeGrafter"/>
</dbReference>
<dbReference type="GO" id="GO:0051085">
    <property type="term" value="P:chaperone cofactor-dependent protein refolding"/>
    <property type="evidence" value="ECO:0007669"/>
    <property type="project" value="TreeGrafter"/>
</dbReference>
<dbReference type="CDD" id="cd00320">
    <property type="entry name" value="cpn10"/>
    <property type="match status" value="1"/>
</dbReference>
<dbReference type="FunFam" id="2.30.33.40:FF:000001">
    <property type="entry name" value="10 kDa chaperonin"/>
    <property type="match status" value="1"/>
</dbReference>
<dbReference type="Gene3D" id="2.30.33.40">
    <property type="entry name" value="GroES chaperonin"/>
    <property type="match status" value="1"/>
</dbReference>
<dbReference type="HAMAP" id="MF_00580">
    <property type="entry name" value="CH10"/>
    <property type="match status" value="1"/>
</dbReference>
<dbReference type="InterPro" id="IPR020818">
    <property type="entry name" value="Chaperonin_GroES"/>
</dbReference>
<dbReference type="InterPro" id="IPR037124">
    <property type="entry name" value="Chaperonin_GroES_sf"/>
</dbReference>
<dbReference type="InterPro" id="IPR018369">
    <property type="entry name" value="Chaprnonin_Cpn10_CS"/>
</dbReference>
<dbReference type="InterPro" id="IPR011032">
    <property type="entry name" value="GroES-like_sf"/>
</dbReference>
<dbReference type="NCBIfam" id="NF001526">
    <property type="entry name" value="PRK00364.1-1"/>
    <property type="match status" value="1"/>
</dbReference>
<dbReference type="NCBIfam" id="NF001527">
    <property type="entry name" value="PRK00364.1-2"/>
    <property type="match status" value="1"/>
</dbReference>
<dbReference type="NCBIfam" id="NF001531">
    <property type="entry name" value="PRK00364.2-2"/>
    <property type="match status" value="1"/>
</dbReference>
<dbReference type="PANTHER" id="PTHR10772">
    <property type="entry name" value="10 KDA HEAT SHOCK PROTEIN"/>
    <property type="match status" value="1"/>
</dbReference>
<dbReference type="PANTHER" id="PTHR10772:SF58">
    <property type="entry name" value="CO-CHAPERONIN GROES"/>
    <property type="match status" value="1"/>
</dbReference>
<dbReference type="Pfam" id="PF00166">
    <property type="entry name" value="Cpn10"/>
    <property type="match status" value="1"/>
</dbReference>
<dbReference type="PRINTS" id="PR00297">
    <property type="entry name" value="CHAPERONIN10"/>
</dbReference>
<dbReference type="SMART" id="SM00883">
    <property type="entry name" value="Cpn10"/>
    <property type="match status" value="1"/>
</dbReference>
<dbReference type="SUPFAM" id="SSF50129">
    <property type="entry name" value="GroES-like"/>
    <property type="match status" value="1"/>
</dbReference>
<dbReference type="PROSITE" id="PS00681">
    <property type="entry name" value="CHAPERONINS_CPN10"/>
    <property type="match status" value="1"/>
</dbReference>
<accession>Q0SXD7</accession>
<keyword id="KW-0143">Chaperone</keyword>
<keyword id="KW-0963">Cytoplasm</keyword>
<protein>
    <recommendedName>
        <fullName evidence="1">Co-chaperonin GroES</fullName>
    </recommendedName>
    <alternativeName>
        <fullName evidence="1">10 kDa chaperonin</fullName>
    </alternativeName>
    <alternativeName>
        <fullName evidence="1">Chaperonin-10</fullName>
        <shortName evidence="1">Cpn10</shortName>
    </alternativeName>
</protein>